<sequence>MSRGFGREKRLLTPRQFKAVFDSPSGKVPGRNVLLLARENDLQHPRLGLVIGKKSVKLSVERNRIKRQIRETFRHHQLELAGWDIVIIARKGLADLDNPELAKQFAKLWKRLSRNPAKTAAEPGAANNTHA</sequence>
<accession>A4VS84</accession>
<protein>
    <recommendedName>
        <fullName evidence="1">Ribonuclease P protein component</fullName>
        <shortName evidence="1">RNase P protein</shortName>
        <shortName evidence="1">RNaseP protein</shortName>
        <ecNumber evidence="1">3.1.26.5</ecNumber>
    </recommendedName>
    <alternativeName>
        <fullName evidence="1">Protein C5</fullName>
    </alternativeName>
</protein>
<keyword id="KW-0255">Endonuclease</keyword>
<keyword id="KW-0378">Hydrolase</keyword>
<keyword id="KW-0540">Nuclease</keyword>
<keyword id="KW-1185">Reference proteome</keyword>
<keyword id="KW-0694">RNA-binding</keyword>
<keyword id="KW-0819">tRNA processing</keyword>
<organism>
    <name type="scientific">Stutzerimonas stutzeri (strain A1501)</name>
    <name type="common">Pseudomonas stutzeri</name>
    <dbReference type="NCBI Taxonomy" id="379731"/>
    <lineage>
        <taxon>Bacteria</taxon>
        <taxon>Pseudomonadati</taxon>
        <taxon>Pseudomonadota</taxon>
        <taxon>Gammaproteobacteria</taxon>
        <taxon>Pseudomonadales</taxon>
        <taxon>Pseudomonadaceae</taxon>
        <taxon>Stutzerimonas</taxon>
    </lineage>
</organism>
<comment type="function">
    <text evidence="1">RNaseP catalyzes the removal of the 5'-leader sequence from pre-tRNA to produce the mature 5'-terminus. It can also cleave other RNA substrates such as 4.5S RNA. The protein component plays an auxiliary but essential role in vivo by binding to the 5'-leader sequence and broadening the substrate specificity of the ribozyme.</text>
</comment>
<comment type="catalytic activity">
    <reaction evidence="1">
        <text>Endonucleolytic cleavage of RNA, removing 5'-extranucleotides from tRNA precursor.</text>
        <dbReference type="EC" id="3.1.26.5"/>
    </reaction>
</comment>
<comment type="subunit">
    <text evidence="1">Consists of a catalytic RNA component (M1 or rnpB) and a protein subunit.</text>
</comment>
<comment type="similarity">
    <text evidence="1">Belongs to the RnpA family.</text>
</comment>
<reference key="1">
    <citation type="journal article" date="2008" name="Proc. Natl. Acad. Sci. U.S.A.">
        <title>Nitrogen fixation island and rhizosphere competence traits in the genome of root-associated Pseudomonas stutzeri A1501.</title>
        <authorList>
            <person name="Yan Y."/>
            <person name="Yang J."/>
            <person name="Dou Y."/>
            <person name="Chen M."/>
            <person name="Ping S."/>
            <person name="Peng J."/>
            <person name="Lu W."/>
            <person name="Zhang W."/>
            <person name="Yao Z."/>
            <person name="Li H."/>
            <person name="Liu W."/>
            <person name="He S."/>
            <person name="Geng L."/>
            <person name="Zhang X."/>
            <person name="Yang F."/>
            <person name="Yu H."/>
            <person name="Zhan Y."/>
            <person name="Li D."/>
            <person name="Lin Z."/>
            <person name="Wang Y."/>
            <person name="Elmerich C."/>
            <person name="Lin M."/>
            <person name="Jin Q."/>
        </authorList>
    </citation>
    <scope>NUCLEOTIDE SEQUENCE [LARGE SCALE GENOMIC DNA]</scope>
    <source>
        <strain>A1501</strain>
    </source>
</reference>
<dbReference type="EC" id="3.1.26.5" evidence="1"/>
<dbReference type="EMBL" id="CP000304">
    <property type="protein sequence ID" value="ABP81835.1"/>
    <property type="molecule type" value="Genomic_DNA"/>
</dbReference>
<dbReference type="RefSeq" id="WP_011915212.1">
    <property type="nucleotide sequence ID" value="NC_009434.1"/>
</dbReference>
<dbReference type="SMR" id="A4VS84"/>
<dbReference type="GeneID" id="66823507"/>
<dbReference type="KEGG" id="psa:PST_4213"/>
<dbReference type="eggNOG" id="COG0594">
    <property type="taxonomic scope" value="Bacteria"/>
</dbReference>
<dbReference type="HOGENOM" id="CLU_117179_11_0_6"/>
<dbReference type="Proteomes" id="UP000000233">
    <property type="component" value="Chromosome"/>
</dbReference>
<dbReference type="GO" id="GO:0030677">
    <property type="term" value="C:ribonuclease P complex"/>
    <property type="evidence" value="ECO:0007669"/>
    <property type="project" value="TreeGrafter"/>
</dbReference>
<dbReference type="GO" id="GO:0042781">
    <property type="term" value="F:3'-tRNA processing endoribonuclease activity"/>
    <property type="evidence" value="ECO:0007669"/>
    <property type="project" value="TreeGrafter"/>
</dbReference>
<dbReference type="GO" id="GO:0004526">
    <property type="term" value="F:ribonuclease P activity"/>
    <property type="evidence" value="ECO:0007669"/>
    <property type="project" value="UniProtKB-UniRule"/>
</dbReference>
<dbReference type="GO" id="GO:0000049">
    <property type="term" value="F:tRNA binding"/>
    <property type="evidence" value="ECO:0007669"/>
    <property type="project" value="UniProtKB-UniRule"/>
</dbReference>
<dbReference type="GO" id="GO:0001682">
    <property type="term" value="P:tRNA 5'-leader removal"/>
    <property type="evidence" value="ECO:0007669"/>
    <property type="project" value="UniProtKB-UniRule"/>
</dbReference>
<dbReference type="Gene3D" id="3.30.230.10">
    <property type="match status" value="1"/>
</dbReference>
<dbReference type="HAMAP" id="MF_00227">
    <property type="entry name" value="RNase_P"/>
    <property type="match status" value="1"/>
</dbReference>
<dbReference type="InterPro" id="IPR020568">
    <property type="entry name" value="Ribosomal_Su5_D2-typ_SF"/>
</dbReference>
<dbReference type="InterPro" id="IPR014721">
    <property type="entry name" value="Ribsml_uS5_D2-typ_fold_subgr"/>
</dbReference>
<dbReference type="InterPro" id="IPR000100">
    <property type="entry name" value="RNase_P"/>
</dbReference>
<dbReference type="NCBIfam" id="TIGR00188">
    <property type="entry name" value="rnpA"/>
    <property type="match status" value="1"/>
</dbReference>
<dbReference type="PANTHER" id="PTHR33992">
    <property type="entry name" value="RIBONUCLEASE P PROTEIN COMPONENT"/>
    <property type="match status" value="1"/>
</dbReference>
<dbReference type="PANTHER" id="PTHR33992:SF1">
    <property type="entry name" value="RIBONUCLEASE P PROTEIN COMPONENT"/>
    <property type="match status" value="1"/>
</dbReference>
<dbReference type="Pfam" id="PF00825">
    <property type="entry name" value="Ribonuclease_P"/>
    <property type="match status" value="1"/>
</dbReference>
<dbReference type="SUPFAM" id="SSF54211">
    <property type="entry name" value="Ribosomal protein S5 domain 2-like"/>
    <property type="match status" value="1"/>
</dbReference>
<feature type="chain" id="PRO_1000021448" description="Ribonuclease P protein component">
    <location>
        <begin position="1"/>
        <end position="131"/>
    </location>
</feature>
<evidence type="ECO:0000255" key="1">
    <source>
        <dbReference type="HAMAP-Rule" id="MF_00227"/>
    </source>
</evidence>
<gene>
    <name evidence="1" type="primary">rnpA</name>
    <name type="ordered locus">PST_4213</name>
</gene>
<proteinExistence type="inferred from homology"/>
<name>RNPA_STUS1</name>